<accession>Q1J934</accession>
<feature type="chain" id="PRO_1000018971" description="Bifunctional purine biosynthesis protein PurH">
    <location>
        <begin position="1"/>
        <end position="515"/>
    </location>
</feature>
<feature type="domain" description="MGS-like" evidence="2">
    <location>
        <begin position="1"/>
        <end position="145"/>
    </location>
</feature>
<name>PUR9_STRPF</name>
<reference key="1">
    <citation type="journal article" date="2006" name="Proc. Natl. Acad. Sci. U.S.A.">
        <title>Molecular genetic anatomy of inter- and intraserotype variation in the human bacterial pathogen group A Streptococcus.</title>
        <authorList>
            <person name="Beres S.B."/>
            <person name="Richter E.W."/>
            <person name="Nagiec M.J."/>
            <person name="Sumby P."/>
            <person name="Porcella S.F."/>
            <person name="DeLeo F.R."/>
            <person name="Musser J.M."/>
        </authorList>
    </citation>
    <scope>NUCLEOTIDE SEQUENCE [LARGE SCALE GENOMIC DNA]</scope>
    <source>
        <strain>MGAS10750</strain>
    </source>
</reference>
<organism>
    <name type="scientific">Streptococcus pyogenes serotype M4 (strain MGAS10750)</name>
    <dbReference type="NCBI Taxonomy" id="370554"/>
    <lineage>
        <taxon>Bacteria</taxon>
        <taxon>Bacillati</taxon>
        <taxon>Bacillota</taxon>
        <taxon>Bacilli</taxon>
        <taxon>Lactobacillales</taxon>
        <taxon>Streptococcaceae</taxon>
        <taxon>Streptococcus</taxon>
    </lineage>
</organism>
<gene>
    <name evidence="1" type="primary">purH</name>
    <name type="ordered locus">MGAS10750_Spy0027</name>
</gene>
<keyword id="KW-0378">Hydrolase</keyword>
<keyword id="KW-0511">Multifunctional enzyme</keyword>
<keyword id="KW-0658">Purine biosynthesis</keyword>
<keyword id="KW-0808">Transferase</keyword>
<sequence length="515" mass="56175">MTKRALISVSDKSGIIDFAKELKNLGWDIISTGGTKVALDNAGVETIAIDDVTGFPEMMDGRVKTLHPNIHGGLLARRDVDSHLQAAKDNNIELIDLVVINLYPFKETILRPDVTYDLAVENIDIGGPSMLRSAAKNHASVTVVVDPADYATVLGELADAGQTTFETRQRLAAKVFRHTAAYDALIAEYFTAQVGEAKPEKLTITYDLKQAMRYGENPQQDADFYQKALPTDYSIASAKQLNGKELSFNNIRDADAAIRIIRDFKDRPTVIALKHMNPCGIGQADDIETAWDYAYEADPVSIFGGIVVLNREVDAATAKKMHPIFLEIIIAPSYSEEALAILTNKKKNLRILELPFDAQAASEVEAEYTGVVGGLLVQNQDVVAENPSDWQVVTDRQPTEQEATALEFAWKAIKYVKSNGIIITNDHMTLGLGAGQTNRVGSVKIAIEQAKDHLDGAVLASDAFFPFADNIEEVAAAGVKAIIQPGGSVRDQDSIDAANKHGLTMIFTGVRHFRH</sequence>
<dbReference type="EC" id="2.1.2.3" evidence="1"/>
<dbReference type="EC" id="3.5.4.10" evidence="1"/>
<dbReference type="EMBL" id="CP000262">
    <property type="protein sequence ID" value="ABF36977.1"/>
    <property type="molecule type" value="Genomic_DNA"/>
</dbReference>
<dbReference type="SMR" id="Q1J934"/>
<dbReference type="KEGG" id="spi:MGAS10750_Spy0027"/>
<dbReference type="HOGENOM" id="CLU_016316_5_2_9"/>
<dbReference type="UniPathway" id="UPA00074">
    <property type="reaction ID" value="UER00133"/>
</dbReference>
<dbReference type="UniPathway" id="UPA00074">
    <property type="reaction ID" value="UER00135"/>
</dbReference>
<dbReference type="Proteomes" id="UP000002434">
    <property type="component" value="Chromosome"/>
</dbReference>
<dbReference type="GO" id="GO:0005829">
    <property type="term" value="C:cytosol"/>
    <property type="evidence" value="ECO:0007669"/>
    <property type="project" value="TreeGrafter"/>
</dbReference>
<dbReference type="GO" id="GO:0003937">
    <property type="term" value="F:IMP cyclohydrolase activity"/>
    <property type="evidence" value="ECO:0007669"/>
    <property type="project" value="UniProtKB-UniRule"/>
</dbReference>
<dbReference type="GO" id="GO:0004643">
    <property type="term" value="F:phosphoribosylaminoimidazolecarboxamide formyltransferase activity"/>
    <property type="evidence" value="ECO:0007669"/>
    <property type="project" value="UniProtKB-UniRule"/>
</dbReference>
<dbReference type="GO" id="GO:0006189">
    <property type="term" value="P:'de novo' IMP biosynthetic process"/>
    <property type="evidence" value="ECO:0007669"/>
    <property type="project" value="UniProtKB-UniRule"/>
</dbReference>
<dbReference type="CDD" id="cd01421">
    <property type="entry name" value="IMPCH"/>
    <property type="match status" value="1"/>
</dbReference>
<dbReference type="FunFam" id="3.40.140.20:FF:000001">
    <property type="entry name" value="Bifunctional purine biosynthesis protein PurH"/>
    <property type="match status" value="1"/>
</dbReference>
<dbReference type="FunFam" id="3.40.140.20:FF:000002">
    <property type="entry name" value="Bifunctional purine biosynthesis protein PurH"/>
    <property type="match status" value="1"/>
</dbReference>
<dbReference type="FunFam" id="3.40.50.1380:FF:000001">
    <property type="entry name" value="Bifunctional purine biosynthesis protein PurH"/>
    <property type="match status" value="1"/>
</dbReference>
<dbReference type="Gene3D" id="3.40.140.20">
    <property type="match status" value="2"/>
</dbReference>
<dbReference type="Gene3D" id="3.40.50.1380">
    <property type="entry name" value="Methylglyoxal synthase-like domain"/>
    <property type="match status" value="1"/>
</dbReference>
<dbReference type="HAMAP" id="MF_00139">
    <property type="entry name" value="PurH"/>
    <property type="match status" value="1"/>
</dbReference>
<dbReference type="InterPro" id="IPR024051">
    <property type="entry name" value="AICAR_Tfase_dup_dom_sf"/>
</dbReference>
<dbReference type="InterPro" id="IPR016193">
    <property type="entry name" value="Cytidine_deaminase-like"/>
</dbReference>
<dbReference type="InterPro" id="IPR011607">
    <property type="entry name" value="MGS-like_dom"/>
</dbReference>
<dbReference type="InterPro" id="IPR036914">
    <property type="entry name" value="MGS-like_dom_sf"/>
</dbReference>
<dbReference type="InterPro" id="IPR002695">
    <property type="entry name" value="PurH-like"/>
</dbReference>
<dbReference type="NCBIfam" id="NF002049">
    <property type="entry name" value="PRK00881.1"/>
    <property type="match status" value="1"/>
</dbReference>
<dbReference type="NCBIfam" id="TIGR00355">
    <property type="entry name" value="purH"/>
    <property type="match status" value="1"/>
</dbReference>
<dbReference type="PANTHER" id="PTHR11692:SF0">
    <property type="entry name" value="BIFUNCTIONAL PURINE BIOSYNTHESIS PROTEIN ATIC"/>
    <property type="match status" value="1"/>
</dbReference>
<dbReference type="PANTHER" id="PTHR11692">
    <property type="entry name" value="BIFUNCTIONAL PURINE BIOSYNTHESIS PROTEIN PURH"/>
    <property type="match status" value="1"/>
</dbReference>
<dbReference type="Pfam" id="PF01808">
    <property type="entry name" value="AICARFT_IMPCHas"/>
    <property type="match status" value="1"/>
</dbReference>
<dbReference type="Pfam" id="PF02142">
    <property type="entry name" value="MGS"/>
    <property type="match status" value="1"/>
</dbReference>
<dbReference type="PIRSF" id="PIRSF000414">
    <property type="entry name" value="AICARFT_IMPCHas"/>
    <property type="match status" value="1"/>
</dbReference>
<dbReference type="SMART" id="SM00798">
    <property type="entry name" value="AICARFT_IMPCHas"/>
    <property type="match status" value="1"/>
</dbReference>
<dbReference type="SMART" id="SM00851">
    <property type="entry name" value="MGS"/>
    <property type="match status" value="1"/>
</dbReference>
<dbReference type="SUPFAM" id="SSF53927">
    <property type="entry name" value="Cytidine deaminase-like"/>
    <property type="match status" value="1"/>
</dbReference>
<dbReference type="SUPFAM" id="SSF52335">
    <property type="entry name" value="Methylglyoxal synthase-like"/>
    <property type="match status" value="1"/>
</dbReference>
<dbReference type="PROSITE" id="PS51855">
    <property type="entry name" value="MGS"/>
    <property type="match status" value="1"/>
</dbReference>
<protein>
    <recommendedName>
        <fullName evidence="1">Bifunctional purine biosynthesis protein PurH</fullName>
    </recommendedName>
    <domain>
        <recommendedName>
            <fullName evidence="1">Phosphoribosylaminoimidazolecarboxamide formyltransferase</fullName>
            <ecNumber evidence="1">2.1.2.3</ecNumber>
        </recommendedName>
        <alternativeName>
            <fullName evidence="1">AICAR transformylase</fullName>
        </alternativeName>
    </domain>
    <domain>
        <recommendedName>
            <fullName evidence="1">IMP cyclohydrolase</fullName>
            <ecNumber evidence="1">3.5.4.10</ecNumber>
        </recommendedName>
        <alternativeName>
            <fullName evidence="1">ATIC</fullName>
        </alternativeName>
        <alternativeName>
            <fullName evidence="1">IMP synthase</fullName>
        </alternativeName>
        <alternativeName>
            <fullName evidence="1">Inosinicase</fullName>
        </alternativeName>
    </domain>
</protein>
<proteinExistence type="inferred from homology"/>
<comment type="catalytic activity">
    <reaction evidence="1">
        <text>(6R)-10-formyltetrahydrofolate + 5-amino-1-(5-phospho-beta-D-ribosyl)imidazole-4-carboxamide = 5-formamido-1-(5-phospho-D-ribosyl)imidazole-4-carboxamide + (6S)-5,6,7,8-tetrahydrofolate</text>
        <dbReference type="Rhea" id="RHEA:22192"/>
        <dbReference type="ChEBI" id="CHEBI:57453"/>
        <dbReference type="ChEBI" id="CHEBI:58467"/>
        <dbReference type="ChEBI" id="CHEBI:58475"/>
        <dbReference type="ChEBI" id="CHEBI:195366"/>
        <dbReference type="EC" id="2.1.2.3"/>
    </reaction>
</comment>
<comment type="catalytic activity">
    <reaction evidence="1">
        <text>IMP + H2O = 5-formamido-1-(5-phospho-D-ribosyl)imidazole-4-carboxamide</text>
        <dbReference type="Rhea" id="RHEA:18445"/>
        <dbReference type="ChEBI" id="CHEBI:15377"/>
        <dbReference type="ChEBI" id="CHEBI:58053"/>
        <dbReference type="ChEBI" id="CHEBI:58467"/>
        <dbReference type="EC" id="3.5.4.10"/>
    </reaction>
</comment>
<comment type="pathway">
    <text evidence="1">Purine metabolism; IMP biosynthesis via de novo pathway; 5-formamido-1-(5-phospho-D-ribosyl)imidazole-4-carboxamide from 5-amino-1-(5-phospho-D-ribosyl)imidazole-4-carboxamide (10-formyl THF route): step 1/1.</text>
</comment>
<comment type="pathway">
    <text evidence="1">Purine metabolism; IMP biosynthesis via de novo pathway; IMP from 5-formamido-1-(5-phospho-D-ribosyl)imidazole-4-carboxamide: step 1/1.</text>
</comment>
<comment type="domain">
    <text evidence="1">The IMP cyclohydrolase activity resides in the N-terminal region.</text>
</comment>
<comment type="similarity">
    <text evidence="1">Belongs to the PurH family.</text>
</comment>
<evidence type="ECO:0000255" key="1">
    <source>
        <dbReference type="HAMAP-Rule" id="MF_00139"/>
    </source>
</evidence>
<evidence type="ECO:0000255" key="2">
    <source>
        <dbReference type="PROSITE-ProRule" id="PRU01202"/>
    </source>
</evidence>